<evidence type="ECO:0000255" key="1">
    <source>
        <dbReference type="HAMAP-Rule" id="MF_00046"/>
    </source>
</evidence>
<organism>
    <name type="scientific">Mycobacteroides abscessus (strain ATCC 19977 / DSM 44196 / CCUG 20993 / CIP 104536 / JCM 13569 / NCTC 13031 / TMC 1543 / L948)</name>
    <name type="common">Mycobacterium abscessus</name>
    <dbReference type="NCBI Taxonomy" id="561007"/>
    <lineage>
        <taxon>Bacteria</taxon>
        <taxon>Bacillati</taxon>
        <taxon>Actinomycetota</taxon>
        <taxon>Actinomycetes</taxon>
        <taxon>Mycobacteriales</taxon>
        <taxon>Mycobacteriaceae</taxon>
        <taxon>Mycobacteroides</taxon>
        <taxon>Mycobacteroides abscessus</taxon>
    </lineage>
</organism>
<reference key="1">
    <citation type="journal article" date="2009" name="PLoS ONE">
        <title>Non mycobacterial virulence genes in the genome of the emerging pathogen Mycobacterium abscessus.</title>
        <authorList>
            <person name="Ripoll F."/>
            <person name="Pasek S."/>
            <person name="Schenowitz C."/>
            <person name="Dossat C."/>
            <person name="Barbe V."/>
            <person name="Rottman M."/>
            <person name="Macheras E."/>
            <person name="Heym B."/>
            <person name="Herrmann J.L."/>
            <person name="Daffe M."/>
            <person name="Brosch R."/>
            <person name="Risler J.L."/>
            <person name="Gaillard J.L."/>
        </authorList>
    </citation>
    <scope>NUCLEOTIDE SEQUENCE [LARGE SCALE GENOMIC DNA]</scope>
    <source>
        <strain>ATCC 19977 / DSM 44196 / CCUG 20993 / CIP 104536 / JCM 13569 / NCTC 13031 / TMC 1543 / L948</strain>
    </source>
</reference>
<gene>
    <name evidence="1" type="primary">murC</name>
    <name type="ordered locus">MAB_2007</name>
</gene>
<proteinExistence type="inferred from homology"/>
<dbReference type="EC" id="6.3.2.8" evidence="1"/>
<dbReference type="EMBL" id="CU458896">
    <property type="protein sequence ID" value="CAM62089.1"/>
    <property type="molecule type" value="Genomic_DNA"/>
</dbReference>
<dbReference type="RefSeq" id="WP_005110498.1">
    <property type="nucleotide sequence ID" value="NZ_MLCG01000002.1"/>
</dbReference>
<dbReference type="SMR" id="B1MP38"/>
<dbReference type="GeneID" id="93378945"/>
<dbReference type="KEGG" id="mab:MAB_2007"/>
<dbReference type="UniPathway" id="UPA00219"/>
<dbReference type="Proteomes" id="UP000007137">
    <property type="component" value="Chromosome"/>
</dbReference>
<dbReference type="GO" id="GO:0005737">
    <property type="term" value="C:cytoplasm"/>
    <property type="evidence" value="ECO:0007669"/>
    <property type="project" value="UniProtKB-SubCell"/>
</dbReference>
<dbReference type="GO" id="GO:0005524">
    <property type="term" value="F:ATP binding"/>
    <property type="evidence" value="ECO:0007669"/>
    <property type="project" value="UniProtKB-UniRule"/>
</dbReference>
<dbReference type="GO" id="GO:0008763">
    <property type="term" value="F:UDP-N-acetylmuramate-L-alanine ligase activity"/>
    <property type="evidence" value="ECO:0007669"/>
    <property type="project" value="UniProtKB-UniRule"/>
</dbReference>
<dbReference type="GO" id="GO:0051301">
    <property type="term" value="P:cell division"/>
    <property type="evidence" value="ECO:0007669"/>
    <property type="project" value="UniProtKB-KW"/>
</dbReference>
<dbReference type="GO" id="GO:0071555">
    <property type="term" value="P:cell wall organization"/>
    <property type="evidence" value="ECO:0007669"/>
    <property type="project" value="UniProtKB-KW"/>
</dbReference>
<dbReference type="GO" id="GO:0009252">
    <property type="term" value="P:peptidoglycan biosynthetic process"/>
    <property type="evidence" value="ECO:0007669"/>
    <property type="project" value="UniProtKB-UniRule"/>
</dbReference>
<dbReference type="GO" id="GO:0008360">
    <property type="term" value="P:regulation of cell shape"/>
    <property type="evidence" value="ECO:0007669"/>
    <property type="project" value="UniProtKB-KW"/>
</dbReference>
<dbReference type="Gene3D" id="3.90.190.20">
    <property type="entry name" value="Mur ligase, C-terminal domain"/>
    <property type="match status" value="1"/>
</dbReference>
<dbReference type="Gene3D" id="3.40.1190.10">
    <property type="entry name" value="Mur-like, catalytic domain"/>
    <property type="match status" value="1"/>
</dbReference>
<dbReference type="Gene3D" id="3.40.50.720">
    <property type="entry name" value="NAD(P)-binding Rossmann-like Domain"/>
    <property type="match status" value="1"/>
</dbReference>
<dbReference type="HAMAP" id="MF_00046">
    <property type="entry name" value="MurC"/>
    <property type="match status" value="1"/>
</dbReference>
<dbReference type="InterPro" id="IPR036565">
    <property type="entry name" value="Mur-like_cat_sf"/>
</dbReference>
<dbReference type="InterPro" id="IPR004101">
    <property type="entry name" value="Mur_ligase_C"/>
</dbReference>
<dbReference type="InterPro" id="IPR036615">
    <property type="entry name" value="Mur_ligase_C_dom_sf"/>
</dbReference>
<dbReference type="InterPro" id="IPR013221">
    <property type="entry name" value="Mur_ligase_cen"/>
</dbReference>
<dbReference type="InterPro" id="IPR000713">
    <property type="entry name" value="Mur_ligase_N"/>
</dbReference>
<dbReference type="InterPro" id="IPR050061">
    <property type="entry name" value="MurCDEF_pg_biosynth"/>
</dbReference>
<dbReference type="InterPro" id="IPR005758">
    <property type="entry name" value="UDP-N-AcMur_Ala_ligase_MurC"/>
</dbReference>
<dbReference type="NCBIfam" id="TIGR01082">
    <property type="entry name" value="murC"/>
    <property type="match status" value="1"/>
</dbReference>
<dbReference type="PANTHER" id="PTHR43445:SF3">
    <property type="entry name" value="UDP-N-ACETYLMURAMATE--L-ALANINE LIGASE"/>
    <property type="match status" value="1"/>
</dbReference>
<dbReference type="PANTHER" id="PTHR43445">
    <property type="entry name" value="UDP-N-ACETYLMURAMATE--L-ALANINE LIGASE-RELATED"/>
    <property type="match status" value="1"/>
</dbReference>
<dbReference type="Pfam" id="PF01225">
    <property type="entry name" value="Mur_ligase"/>
    <property type="match status" value="1"/>
</dbReference>
<dbReference type="Pfam" id="PF02875">
    <property type="entry name" value="Mur_ligase_C"/>
    <property type="match status" value="1"/>
</dbReference>
<dbReference type="Pfam" id="PF08245">
    <property type="entry name" value="Mur_ligase_M"/>
    <property type="match status" value="1"/>
</dbReference>
<dbReference type="SUPFAM" id="SSF51984">
    <property type="entry name" value="MurCD N-terminal domain"/>
    <property type="match status" value="1"/>
</dbReference>
<dbReference type="SUPFAM" id="SSF53623">
    <property type="entry name" value="MurD-like peptide ligases, catalytic domain"/>
    <property type="match status" value="1"/>
</dbReference>
<dbReference type="SUPFAM" id="SSF53244">
    <property type="entry name" value="MurD-like peptide ligases, peptide-binding domain"/>
    <property type="match status" value="1"/>
</dbReference>
<protein>
    <recommendedName>
        <fullName evidence="1">UDP-N-acetylmuramate--L-alanine ligase</fullName>
        <ecNumber evidence="1">6.3.2.8</ecNumber>
    </recommendedName>
    <alternativeName>
        <fullName evidence="1">UDP-N-acetylmuramoyl-L-alanine synthetase</fullName>
    </alternativeName>
</protein>
<accession>B1MP38</accession>
<name>MURC_MYCA9</name>
<sequence>MNAGPLPEHLRRVHMVGIGGAGMSGIARILLDRGAQVSGSDAKESRGVLALRARGALVNIGHDGDALDLLPGGPTVVVTTHAAIPKTNPELVEANRRGIPVLLRPVVLADLMAGYRTLMVTGTHGKTSTTSMLIVALQHCGYDPSFAVGGELNEAGTNAHHGSGDVFVAEADESDGSLLQYRPNLIIVTNIEADHLDHFGSVEAYSAVFDEFAETLGSEGVLVVCLDDPGAAALARRAHERGIRVRGYGSADQAEAGDVPVAGQLRDWQFKDTGATAQIQLAGESAPRTMRLSVPGRHMALNALAAVVTAAEIGAAVDDVLDGLAGFEGVRRRFELVGSVESVRVFDDYAHHPTEVRTVLQAVSGIVAQQGFGRSVVVFQPHLYSRTAAFATEFADALSIADLVFVLDVYGAREAPLPGVTGALIVEQIAGAPVHYLPDLSTVAQQVAAATAPGDLVITMGAGDVTLQGKEIVRALRARANDWPPPGNGR</sequence>
<keyword id="KW-0067">ATP-binding</keyword>
<keyword id="KW-0131">Cell cycle</keyword>
<keyword id="KW-0132">Cell division</keyword>
<keyword id="KW-0133">Cell shape</keyword>
<keyword id="KW-0961">Cell wall biogenesis/degradation</keyword>
<keyword id="KW-0963">Cytoplasm</keyword>
<keyword id="KW-0436">Ligase</keyword>
<keyword id="KW-0547">Nucleotide-binding</keyword>
<keyword id="KW-0573">Peptidoglycan synthesis</keyword>
<keyword id="KW-1185">Reference proteome</keyword>
<feature type="chain" id="PRO_1000116627" description="UDP-N-acetylmuramate--L-alanine ligase">
    <location>
        <begin position="1"/>
        <end position="490"/>
    </location>
</feature>
<feature type="binding site" evidence="1">
    <location>
        <begin position="122"/>
        <end position="128"/>
    </location>
    <ligand>
        <name>ATP</name>
        <dbReference type="ChEBI" id="CHEBI:30616"/>
    </ligand>
</feature>
<comment type="function">
    <text evidence="1">Cell wall formation.</text>
</comment>
<comment type="catalytic activity">
    <reaction evidence="1">
        <text>UDP-N-acetyl-alpha-D-muramate + L-alanine + ATP = UDP-N-acetyl-alpha-D-muramoyl-L-alanine + ADP + phosphate + H(+)</text>
        <dbReference type="Rhea" id="RHEA:23372"/>
        <dbReference type="ChEBI" id="CHEBI:15378"/>
        <dbReference type="ChEBI" id="CHEBI:30616"/>
        <dbReference type="ChEBI" id="CHEBI:43474"/>
        <dbReference type="ChEBI" id="CHEBI:57972"/>
        <dbReference type="ChEBI" id="CHEBI:70757"/>
        <dbReference type="ChEBI" id="CHEBI:83898"/>
        <dbReference type="ChEBI" id="CHEBI:456216"/>
        <dbReference type="EC" id="6.3.2.8"/>
    </reaction>
</comment>
<comment type="pathway">
    <text evidence="1">Cell wall biogenesis; peptidoglycan biosynthesis.</text>
</comment>
<comment type="subcellular location">
    <subcellularLocation>
        <location evidence="1">Cytoplasm</location>
    </subcellularLocation>
</comment>
<comment type="similarity">
    <text evidence="1">Belongs to the MurCDEF family.</text>
</comment>